<evidence type="ECO:0000255" key="1">
    <source>
        <dbReference type="PROSITE-ProRule" id="PRU00793"/>
    </source>
</evidence>
<evidence type="ECO:0000256" key="2">
    <source>
        <dbReference type="SAM" id="MobiDB-lite"/>
    </source>
</evidence>
<evidence type="ECO:0000303" key="3">
    <source ref="1"/>
</evidence>
<evidence type="ECO:0000305" key="4"/>
<feature type="chain" id="PRO_0000459598" description="Collagen, type I, alpha 1a">
    <location>
        <begin position="1"/>
        <end position="1074"/>
    </location>
</feature>
<feature type="domain" description="Fibrillar collagen NC1" evidence="1">
    <location>
        <begin position="1014"/>
        <end position="1074"/>
    </location>
</feature>
<feature type="region of interest" description="Disordered" evidence="2">
    <location>
        <begin position="1"/>
        <end position="1010"/>
    </location>
</feature>
<feature type="compositionally biased region" description="Pro residues" evidence="2">
    <location>
        <begin position="1"/>
        <end position="13"/>
    </location>
</feature>
<feature type="compositionally biased region" description="Low complexity" evidence="2">
    <location>
        <begin position="14"/>
        <end position="36"/>
    </location>
</feature>
<feature type="compositionally biased region" description="Basic and acidic residues" evidence="2">
    <location>
        <begin position="45"/>
        <end position="59"/>
    </location>
</feature>
<feature type="compositionally biased region" description="Low complexity" evidence="2">
    <location>
        <begin position="129"/>
        <end position="147"/>
    </location>
</feature>
<feature type="compositionally biased region" description="Pro residues" evidence="2">
    <location>
        <begin position="149"/>
        <end position="162"/>
    </location>
</feature>
<feature type="compositionally biased region" description="Gly residues" evidence="2">
    <location>
        <begin position="163"/>
        <end position="181"/>
    </location>
</feature>
<feature type="compositionally biased region" description="Low complexity" evidence="2">
    <location>
        <begin position="182"/>
        <end position="225"/>
    </location>
</feature>
<feature type="compositionally biased region" description="Low complexity" evidence="2">
    <location>
        <begin position="234"/>
        <end position="272"/>
    </location>
</feature>
<feature type="compositionally biased region" description="Low complexity" evidence="2">
    <location>
        <begin position="290"/>
        <end position="299"/>
    </location>
</feature>
<feature type="compositionally biased region" description="Gly residues" evidence="2">
    <location>
        <begin position="301"/>
        <end position="313"/>
    </location>
</feature>
<feature type="compositionally biased region" description="Low complexity" evidence="2">
    <location>
        <begin position="377"/>
        <end position="392"/>
    </location>
</feature>
<feature type="compositionally biased region" description="Low complexity" evidence="2">
    <location>
        <begin position="469"/>
        <end position="530"/>
    </location>
</feature>
<feature type="compositionally biased region" description="Low complexity" evidence="2">
    <location>
        <begin position="563"/>
        <end position="578"/>
    </location>
</feature>
<feature type="compositionally biased region" description="Gly residues" evidence="2">
    <location>
        <begin position="588"/>
        <end position="597"/>
    </location>
</feature>
<feature type="compositionally biased region" description="Low complexity" evidence="2">
    <location>
        <begin position="611"/>
        <end position="647"/>
    </location>
</feature>
<feature type="compositionally biased region" description="Low complexity" evidence="2">
    <location>
        <begin position="661"/>
        <end position="683"/>
    </location>
</feature>
<feature type="compositionally biased region" description="Pro residues" evidence="2">
    <location>
        <begin position="685"/>
        <end position="697"/>
    </location>
</feature>
<feature type="compositionally biased region" description="Low complexity" evidence="2">
    <location>
        <begin position="715"/>
        <end position="742"/>
    </location>
</feature>
<feature type="compositionally biased region" description="Low complexity" evidence="2">
    <location>
        <begin position="803"/>
        <end position="823"/>
    </location>
</feature>
<feature type="compositionally biased region" description="Pro residues" evidence="2">
    <location>
        <begin position="847"/>
        <end position="857"/>
    </location>
</feature>
<feature type="compositionally biased region" description="Low complexity" evidence="2">
    <location>
        <begin position="871"/>
        <end position="890"/>
    </location>
</feature>
<feature type="compositionally biased region" description="Basic and acidic residues" evidence="2">
    <location>
        <begin position="893"/>
        <end position="907"/>
    </location>
</feature>
<feature type="compositionally biased region" description="Low complexity" evidence="2">
    <location>
        <begin position="920"/>
        <end position="956"/>
    </location>
</feature>
<feature type="compositionally biased region" description="Pro residues" evidence="2">
    <location>
        <begin position="974"/>
        <end position="986"/>
    </location>
</feature>
<feature type="disulfide bond" description="Interchain" evidence="1">
    <location>
        <position position="1047"/>
    </location>
</feature>
<feature type="disulfide bond" description="Interchain" evidence="1">
    <location>
        <position position="1072"/>
    </location>
</feature>
<feature type="non-consecutive residues" evidence="3">
    <location>
        <begin position="17"/>
        <end position="18"/>
    </location>
</feature>
<feature type="non-consecutive residues" evidence="3">
    <location>
        <begin position="23"/>
        <end position="24"/>
    </location>
</feature>
<feature type="non-consecutive residues" evidence="3">
    <location>
        <begin position="344"/>
        <end position="345"/>
    </location>
</feature>
<feature type="non-consecutive residues" evidence="3">
    <location>
        <begin position="485"/>
        <end position="486"/>
    </location>
</feature>
<feature type="non-consecutive residues" evidence="3">
    <location>
        <begin position="905"/>
        <end position="906"/>
    </location>
</feature>
<feature type="non-consecutive residues" evidence="3">
    <location>
        <begin position="1010"/>
        <end position="1011"/>
    </location>
</feature>
<feature type="non-consecutive residues" evidence="3">
    <location>
        <begin position="1037"/>
        <end position="1038"/>
    </location>
</feature>
<feature type="non-consecutive residues" evidence="3">
    <location>
        <begin position="1056"/>
        <end position="1057"/>
    </location>
</feature>
<feature type="non-terminal residue" evidence="3">
    <location>
        <position position="1"/>
    </location>
</feature>
<sequence length="1074" mass="96458">KSPAMPVPGPMGPMGPRSGPQGFPGEAGAAGAMGPRGPAGPPGKNGEDGESGKPGRGGERGPPGPQGARGFPGTPGLPGMKGHRGFSGLDGAKGDSGPAGPKGESGAPGENGTPGAMGPRGLPGERGRTGAAGAAGARGNDGAAGAAGPPGPTGPAGPPGFPGGPGAKGDAGAQGGRGPEGPAGARGEPGNPGPAGAAGPSGNPGTDGAAGPKGTPGAAGVAGAPGFPGPRGPSGPQGAAGAPGPKGNTGEVGAPGAKGEAGAKGEAGAPGVQGPPGPSGEEGKRGARGEPGAAGARGAPGERGGPGGRGFPGSDGPAGPKGATGERGAPGAVGPKGSTGESGRGMTGSPGSPGPDGKTGPAGPSGQDGRPGPPGPVGARGQPGVMGFPGPKGAAGEGGKPGERGVMGPTGAAGAPGKDGDVGAPGPSGPAGPAGERGEQGPAGAPGFQGLPGPQGALGETGKPGEQGVPGEAGATGPAGARGDRGAPGALGPAGARGSPGSAGNDGAKGDAGAPGAPGAQGPPGLQGMPGERGAAGLPGLRGDRGDQGAKGADGAPGKDGPRGLTGPLGLPGPAGATGDKGEPGPAGPVGPGGARGAPGERGESGPPGPAGFAGPPGADGQPGAKGEAGDNGAKGDAGPPGAAGPTGAPGPQGPVGNTGPKGARGAAGPPGATGFPGAAGRVGPPGPSGNPGPPGPAGGTGKEGPKGNRGETGPAGRPGELGAAGPPGPAGEKGSPGSEGATGSAGLPGPQGLAGQRGLVGLPGQRGERGFSGLPGPAGEPGKPGPSGPGGERGPPGPMGPPGLAGAPGEPGREGSPGSEGSAGRDGAAGPKGDRGESGPSGAPGAPGPPGAPGPVGPAGKNGDRGETGPAGPAGSAGPAGPRGPAGAPGLRGDKGESGEAGERGHRGFTGMQGPPGPSGSSGEQGPAGAAGPAGPRGPAGSAGSPGKDGMSGLPGPTGPPGPRGRSGEMGPAGPPGPPGPPGAPGAPGGGFDLGFLSQPQEKAPDPYRDRDLEVDSTLKSLSQQLEQLRSPDGTRFTYSVLEDGCTSHTGTWGKVGAPDQEFGLEVGPVCFL</sequence>
<accession>C0HM84</accession>
<reference evidence="4" key="1">
    <citation type="submission" date="2023-05" db="UniProtKB">
        <title>Grouping groupers in the Mediterranean: ecological baselines revealed by ancient proteins.</title>
        <authorList>
            <person name="Winter R.M."/>
            <person name="de Kock W."/>
            <person name="Mackie M."/>
            <person name="Ramsoe M."/>
            <person name="Desidera E."/>
            <person name="Collins M."/>
            <person name="Guidetti P."/>
            <person name="Presslee S."/>
            <person name="Munoz-Alegre M."/>
            <person name="Oueslati T."/>
            <person name="Morales-Muniz A."/>
            <person name="Michailidis D."/>
            <person name="van den Hurk Y."/>
            <person name="Taurozzi A.J."/>
            <person name="Cakirlar C."/>
        </authorList>
    </citation>
    <scope>PROTEIN SEQUENCE</scope>
    <scope>IDENTIFICATION BY MASS SPECTROMETRY</scope>
    <source>
        <tissue evidence="3">Bone</tissue>
    </source>
</reference>
<protein>
    <recommendedName>
        <fullName evidence="4">Collagen, type I, alpha 1a</fullName>
        <shortName evidence="4">col1a1a</shortName>
    </recommendedName>
    <alternativeName>
        <fullName evidence="4">Alpha-1 type I collagen</fullName>
    </alternativeName>
</protein>
<organism evidence="3">
    <name type="scientific">Epinephelus marginatus</name>
    <name type="common">Dusky grouper</name>
    <dbReference type="NCBI Taxonomy" id="179535"/>
    <lineage>
        <taxon>Eukaryota</taxon>
        <taxon>Metazoa</taxon>
        <taxon>Chordata</taxon>
        <taxon>Craniata</taxon>
        <taxon>Vertebrata</taxon>
        <taxon>Euteleostomi</taxon>
        <taxon>Actinopterygii</taxon>
        <taxon>Neopterygii</taxon>
        <taxon>Teleostei</taxon>
        <taxon>Neoteleostei</taxon>
        <taxon>Acanthomorphata</taxon>
        <taxon>Eupercaria</taxon>
        <taxon>Perciformes</taxon>
        <taxon>Serranoidei</taxon>
        <taxon>Serranidae</taxon>
        <taxon>Epinephelinae</taxon>
        <taxon>Epinephelini</taxon>
        <taxon>Epinephelus</taxon>
    </lineage>
</organism>
<dbReference type="GO" id="GO:0005581">
    <property type="term" value="C:collagen trimer"/>
    <property type="evidence" value="ECO:0007669"/>
    <property type="project" value="UniProtKB-KW"/>
</dbReference>
<dbReference type="GO" id="GO:0031012">
    <property type="term" value="C:extracellular matrix"/>
    <property type="evidence" value="ECO:0007669"/>
    <property type="project" value="TreeGrafter"/>
</dbReference>
<dbReference type="GO" id="GO:0005615">
    <property type="term" value="C:extracellular space"/>
    <property type="evidence" value="ECO:0007669"/>
    <property type="project" value="TreeGrafter"/>
</dbReference>
<dbReference type="GO" id="GO:0005201">
    <property type="term" value="F:extracellular matrix structural constituent"/>
    <property type="evidence" value="ECO:0007669"/>
    <property type="project" value="InterPro"/>
</dbReference>
<dbReference type="InterPro" id="IPR008160">
    <property type="entry name" value="Collagen"/>
</dbReference>
<dbReference type="InterPro" id="IPR050149">
    <property type="entry name" value="Collagen_superfamily"/>
</dbReference>
<dbReference type="InterPro" id="IPR000885">
    <property type="entry name" value="Fib_collagen_C"/>
</dbReference>
<dbReference type="PANTHER" id="PTHR24023">
    <property type="entry name" value="COLLAGEN ALPHA"/>
    <property type="match status" value="1"/>
</dbReference>
<dbReference type="PANTHER" id="PTHR24023:SF1082">
    <property type="entry name" value="COLLAGEN TRIPLE HELIX REPEAT"/>
    <property type="match status" value="1"/>
</dbReference>
<dbReference type="Pfam" id="PF01391">
    <property type="entry name" value="Collagen"/>
    <property type="match status" value="5"/>
</dbReference>
<dbReference type="SMART" id="SM00038">
    <property type="entry name" value="COLFI"/>
    <property type="match status" value="1"/>
</dbReference>
<name>CO1AA_EPIMA</name>
<comment type="subcellular location">
    <subcellularLocation>
        <location evidence="1">Secreted</location>
        <location evidence="1">Extracellular space</location>
        <location evidence="1">Extracellular matrix</location>
    </subcellularLocation>
</comment>
<comment type="similarity">
    <text evidence="1">Belongs to the fibrillar collagen family.</text>
</comment>
<proteinExistence type="evidence at protein level"/>
<keyword id="KW-0176">Collagen</keyword>
<keyword id="KW-0903">Direct protein sequencing</keyword>
<keyword id="KW-1015">Disulfide bond</keyword>
<keyword id="KW-0272">Extracellular matrix</keyword>
<keyword id="KW-0964">Secreted</keyword>